<accession>G4N5Q2</accession>
<accession>Q069J4</accession>
<organism>
    <name type="scientific">Pyricularia oryzae (strain 70-15 / ATCC MYA-4617 / FGSC 8958)</name>
    <name type="common">Rice blast fungus</name>
    <name type="synonym">Magnaporthe oryzae</name>
    <dbReference type="NCBI Taxonomy" id="242507"/>
    <lineage>
        <taxon>Eukaryota</taxon>
        <taxon>Fungi</taxon>
        <taxon>Dikarya</taxon>
        <taxon>Ascomycota</taxon>
        <taxon>Pezizomycotina</taxon>
        <taxon>Sordariomycetes</taxon>
        <taxon>Sordariomycetidae</taxon>
        <taxon>Magnaporthales</taxon>
        <taxon>Pyriculariaceae</taxon>
        <taxon>Pyricularia</taxon>
    </lineage>
</organism>
<evidence type="ECO:0000255" key="1"/>
<evidence type="ECO:0000255" key="2">
    <source>
        <dbReference type="PROSITE-ProRule" id="PRU00042"/>
    </source>
</evidence>
<evidence type="ECO:0000256" key="3">
    <source>
        <dbReference type="SAM" id="MobiDB-lite"/>
    </source>
</evidence>
<evidence type="ECO:0000269" key="4">
    <source>
    </source>
</evidence>
<evidence type="ECO:0000269" key="5">
    <source>
    </source>
</evidence>
<evidence type="ECO:0000269" key="6">
    <source ref="3"/>
</evidence>
<evidence type="ECO:0000303" key="7">
    <source ref="3"/>
</evidence>
<evidence type="ECO:0000305" key="8"/>
<comment type="function">
    <text evidence="4 5">Transcription factor that plays a central role in appressorium formation and pathogenicity (PubMed:17378924, PubMed:9487695). Required for the expression of a large set of genes including factors that might play a role in membrane metabolism and ergosterol biosynthesis, the chitin-binding protein CBP1,as well as CHS7 that is essential for normal pathogenic development (PubMed:17378924).</text>
</comment>
<comment type="subcellular location">
    <subcellularLocation>
        <location evidence="4">Nucleus</location>
    </subcellularLocation>
</comment>
<comment type="disruption phenotype">
    <text evidence="4 5 6">Impairs appressorium formation and growth in plant hosts.</text>
</comment>
<comment type="sequence caution" evidence="8">
    <conflict type="erroneous gene model prediction">
        <sequence resource="EMBL-CDS" id="EHA53042"/>
    </conflict>
</comment>
<protein>
    <recommendedName>
        <fullName evidence="8">C2H2 finger domain transcription factor CON7</fullName>
    </recommendedName>
</protein>
<reference key="1">
    <citation type="journal article" date="2007" name="Mol. Microbiol.">
        <title>The transcription factor Con7p is a central regulator of infection-related morphogenesis in the rice blast fungus Magnaporthe grisea.</title>
        <authorList>
            <person name="Odenbach D."/>
            <person name="Breth B."/>
            <person name="Thines E."/>
            <person name="Weber R.W."/>
            <person name="Anke H."/>
            <person name="Foster A.J."/>
        </authorList>
    </citation>
    <scope>NUCLEOTIDE SEQUENCE [MRNA]</scope>
    <scope>SUBCELLULAR LOCATION</scope>
    <scope>DISRUPTION PHENOTYPE</scope>
    <scope>FUNCTION</scope>
    <source>
        <strain>70-15 / ATCC MYA-4617 / FGSC 8958</strain>
    </source>
</reference>
<reference key="2">
    <citation type="journal article" date="2005" name="Nature">
        <title>The genome sequence of the rice blast fungus Magnaporthe grisea.</title>
        <authorList>
            <person name="Dean R.A."/>
            <person name="Talbot N.J."/>
            <person name="Ebbole D.J."/>
            <person name="Farman M.L."/>
            <person name="Mitchell T.K."/>
            <person name="Orbach M.J."/>
            <person name="Thon M.R."/>
            <person name="Kulkarni R."/>
            <person name="Xu J.-R."/>
            <person name="Pan H."/>
            <person name="Read N.D."/>
            <person name="Lee Y.-H."/>
            <person name="Carbone I."/>
            <person name="Brown D."/>
            <person name="Oh Y.Y."/>
            <person name="Donofrio N."/>
            <person name="Jeong J.S."/>
            <person name="Soanes D.M."/>
            <person name="Djonovic S."/>
            <person name="Kolomiets E."/>
            <person name="Rehmeyer C."/>
            <person name="Li W."/>
            <person name="Harding M."/>
            <person name="Kim S."/>
            <person name="Lebrun M.-H."/>
            <person name="Bohnert H."/>
            <person name="Coughlan S."/>
            <person name="Butler J."/>
            <person name="Calvo S.E."/>
            <person name="Ma L.-J."/>
            <person name="Nicol R."/>
            <person name="Purcell S."/>
            <person name="Nusbaum C."/>
            <person name="Galagan J.E."/>
            <person name="Birren B.W."/>
        </authorList>
    </citation>
    <scope>NUCLEOTIDE SEQUENCE [LARGE SCALE GENOMIC DNA]</scope>
    <source>
        <strain>70-15 / ATCC MYA-4617 / FGSC 8958</strain>
    </source>
</reference>
<reference key="3">
    <citation type="journal article" date="1995" name="Mol. Plant Microbe Interact.">
        <title>Genetic analysis of sporulation in Magnaporthe grisea by chemical and insertional mutagenesis.</title>
        <authorList>
            <person name="Shi Z."/>
            <person name="Leung H."/>
        </authorList>
    </citation>
    <scope>IDENTIFICATION</scope>
    <scope>DISRUPTION PHENOTYPE</scope>
</reference>
<reference key="4">
    <citation type="journal article" date="1998" name="Mol. Plant Microbe Interact.">
        <title>Interactions between spore morphogenetic mutations affect cell types, sporulation, and pathogenesis in Magnaporthe grisea.</title>
        <authorList>
            <person name="Shi Z."/>
            <person name="Christian D."/>
            <person name="Leung H."/>
        </authorList>
    </citation>
    <scope>FUNCTION</scope>
    <scope>DISRUPTION PHENOTYPE</scope>
</reference>
<gene>
    <name evidence="7" type="primary">CON7</name>
    <name type="ORF">MGG_05287</name>
</gene>
<dbReference type="EMBL" id="DQ985585">
    <property type="protein sequence ID" value="ABI96241.1"/>
    <property type="molecule type" value="mRNA"/>
</dbReference>
<dbReference type="EMBL" id="CM001233">
    <property type="protein sequence ID" value="EHA53042.1"/>
    <property type="status" value="ALT_SEQ"/>
    <property type="molecule type" value="Genomic_DNA"/>
</dbReference>
<dbReference type="RefSeq" id="XP_003712849.1">
    <property type="nucleotide sequence ID" value="XM_003712801.1"/>
</dbReference>
<dbReference type="SMR" id="G4N5Q2"/>
<dbReference type="STRING" id="242507.G4N5Q2"/>
<dbReference type="GeneID" id="2675319"/>
<dbReference type="KEGG" id="mgr:MGG_05287"/>
<dbReference type="eggNOG" id="ENOG502S48N">
    <property type="taxonomic scope" value="Eukaryota"/>
</dbReference>
<dbReference type="HOGENOM" id="CLU_030366_0_0_1"/>
<dbReference type="InParanoid" id="G4N5Q2"/>
<dbReference type="OrthoDB" id="1939603at2759"/>
<dbReference type="PHI-base" id="PHI:2039"/>
<dbReference type="Proteomes" id="UP000009058">
    <property type="component" value="Chromosome 3"/>
</dbReference>
<dbReference type="GO" id="GO:0005634">
    <property type="term" value="C:nucleus"/>
    <property type="evidence" value="ECO:0007669"/>
    <property type="project" value="UniProtKB-SubCell"/>
</dbReference>
<dbReference type="GO" id="GO:0008270">
    <property type="term" value="F:zinc ion binding"/>
    <property type="evidence" value="ECO:0007669"/>
    <property type="project" value="UniProtKB-KW"/>
</dbReference>
<dbReference type="GO" id="GO:0006355">
    <property type="term" value="P:regulation of DNA-templated transcription"/>
    <property type="evidence" value="ECO:0007669"/>
    <property type="project" value="InterPro"/>
</dbReference>
<dbReference type="Gene3D" id="3.30.160.60">
    <property type="entry name" value="Classic Zinc Finger"/>
    <property type="match status" value="1"/>
</dbReference>
<dbReference type="InterPro" id="IPR039327">
    <property type="entry name" value="CON7-like"/>
</dbReference>
<dbReference type="InterPro" id="IPR013087">
    <property type="entry name" value="Znf_C2H2_type"/>
</dbReference>
<dbReference type="PANTHER" id="PTHR36167">
    <property type="entry name" value="C2H2 FINGER DOMAIN TRANSCRIPTION FACTOR (EUROFUNG)-RELATED"/>
    <property type="match status" value="1"/>
</dbReference>
<dbReference type="PANTHER" id="PTHR36167:SF3">
    <property type="entry name" value="C2H2 FINGER DOMAIN TRANSCRIPTION FACTOR (EUROFUNG)-RELATED"/>
    <property type="match status" value="1"/>
</dbReference>
<dbReference type="PROSITE" id="PS00028">
    <property type="entry name" value="ZINC_FINGER_C2H2_1"/>
    <property type="match status" value="1"/>
</dbReference>
<dbReference type="PROSITE" id="PS50157">
    <property type="entry name" value="ZINC_FINGER_C2H2_2"/>
    <property type="match status" value="1"/>
</dbReference>
<proteinExistence type="evidence at transcript level"/>
<feature type="chain" id="PRO_0000435643" description="C2H2 finger domain transcription factor CON7">
    <location>
        <begin position="1"/>
        <end position="402"/>
    </location>
</feature>
<feature type="zinc finger region" description="C2H2-type" evidence="2">
    <location>
        <begin position="256"/>
        <end position="282"/>
    </location>
</feature>
<feature type="region of interest" description="Disordered" evidence="3">
    <location>
        <begin position="1"/>
        <end position="247"/>
    </location>
</feature>
<feature type="region of interest" description="Disordered" evidence="3">
    <location>
        <begin position="302"/>
        <end position="402"/>
    </location>
</feature>
<feature type="coiled-coil region" evidence="1">
    <location>
        <begin position="289"/>
        <end position="323"/>
    </location>
</feature>
<feature type="compositionally biased region" description="Polar residues" evidence="3">
    <location>
        <begin position="19"/>
        <end position="49"/>
    </location>
</feature>
<feature type="compositionally biased region" description="Polar residues" evidence="3">
    <location>
        <begin position="72"/>
        <end position="86"/>
    </location>
</feature>
<feature type="compositionally biased region" description="Low complexity" evidence="3">
    <location>
        <begin position="87"/>
        <end position="98"/>
    </location>
</feature>
<feature type="compositionally biased region" description="Polar residues" evidence="3">
    <location>
        <begin position="99"/>
        <end position="116"/>
    </location>
</feature>
<feature type="compositionally biased region" description="Polar residues" evidence="3">
    <location>
        <begin position="125"/>
        <end position="151"/>
    </location>
</feature>
<feature type="compositionally biased region" description="Basic and acidic residues" evidence="3">
    <location>
        <begin position="302"/>
        <end position="317"/>
    </location>
</feature>
<feature type="compositionally biased region" description="Polar residues" evidence="3">
    <location>
        <begin position="322"/>
        <end position="341"/>
    </location>
</feature>
<feature type="compositionally biased region" description="Polar residues" evidence="3">
    <location>
        <begin position="363"/>
        <end position="373"/>
    </location>
</feature>
<feature type="compositionally biased region" description="Polar residues" evidence="3">
    <location>
        <begin position="392"/>
        <end position="402"/>
    </location>
</feature>
<name>CON7_PYRO7</name>
<sequence length="402" mass="43527">MLASSRQPRHAFVEHHHQLSSSTLHRSGSPQTGTLRQDATTPTLATSVGPSMDRSASDYSQSGLPSPYPSNCGDNQSEAQSVTVDTSSAAQYNASAQQEVRSNNPGNYSASATPTSEYGVYPASARSSSFPDHLQQRSYHPASNHSGSSGDPSIAAPSPTYGAPAQYSPYGPPSQDMSHGYAHPGSNLYAQPRPDWSGYGQQHGAPLTPGHHVFPQTPTSAPPQARPNQVYSFVPIPGAQQHKRPRRRYEEIERMYKCGWQGCEKAYGTLNHLNAHVTMQSHGQKRTPEEFKEIRKEWKARKKEEEAARKADEERQRQAAQSQGGSTEGQAGSDVSQSSNGYAGARGAVQLPPIGYQAGQYPAATSTSVQQQPLPDYNASYMQGYQPASPYGGSNQAMYNQR</sequence>
<keyword id="KW-0175">Coiled coil</keyword>
<keyword id="KW-0479">Metal-binding</keyword>
<keyword id="KW-0539">Nucleus</keyword>
<keyword id="KW-1185">Reference proteome</keyword>
<keyword id="KW-0804">Transcription</keyword>
<keyword id="KW-0805">Transcription regulation</keyword>
<keyword id="KW-0843">Virulence</keyword>
<keyword id="KW-0862">Zinc</keyword>
<keyword id="KW-0863">Zinc-finger</keyword>